<sequence>MDDASPLSNPAKEPAALRSLLGRTNRDWWPNQLSLDILHQHGRHGNPMGDDFDYAEAFKTLDYFAVKRDLHALMTDSQPWWPADYGHYGPFFIRMAWHSAGTYRTGDGRGGANSGNQRFAPLNSWPDNANLDKARRLLWPVKKKYGAKLSWADLMIMAGNVAFESMGAPVFGFGGGRADIFEPEKDVYWGTEEQWVGKGAKTRIVEGKAFEDPLAAVQMGLIYVNPEGPDGSPDPWASARDIRMTFARMGMNDEETLALTAGGHTFGKCHGAGDAAKIGAEPEGADIAQQGLGWTSSHESGMGDHTITSGLEGPWTPTPIKWDMSYFHMLLDYKYELVRSPAGAKQWQPVNPKPEDLAPGAHSPDRRVPTMMTTADLAFAMDPEYRKIAERFRDNPDQFADAFARAWFKLCHRDMGPKSRYLGPEVPAEDLIWQDPIPPVDHPLAEAADIASLKAKLLDSGLSVADLVRTAWASAATYRGSDHRGGANGARIRLAPQKDWEVNEPEKLARVLGVLEKVKADFDASAGGGKKISLADLIVLGGCAGIEKAARDAGHAIEVPFAPGRTDASPEQTDVESFEVLEPKADGFRNYLQVRFSVPTEELLIDRSQLLGLSAPEMTVLVGGLRVLGVNHGGSKNGVFTDRPGQLTNDFFVNLLDMGTAWKQVDDKADDLFVGTCRRTHEEKWTATRTDLVFGSNSQLRALSEVYASDDAGERFVKDFVRAWTKVMNADRFDLPRAQRLARAA</sequence>
<proteinExistence type="inferred from homology"/>
<feature type="chain" id="PRO_0000354858" description="Catalase-peroxidase">
    <location>
        <begin position="1"/>
        <end position="745"/>
    </location>
</feature>
<feature type="region of interest" description="Disordered" evidence="2">
    <location>
        <begin position="345"/>
        <end position="368"/>
    </location>
</feature>
<feature type="active site" description="Proton acceptor" evidence="1">
    <location>
        <position position="98"/>
    </location>
</feature>
<feature type="binding site" description="axial binding residue" evidence="1">
    <location>
        <position position="264"/>
    </location>
    <ligand>
        <name>heme b</name>
        <dbReference type="ChEBI" id="CHEBI:60344"/>
    </ligand>
    <ligandPart>
        <name>Fe</name>
        <dbReference type="ChEBI" id="CHEBI:18248"/>
    </ligandPart>
</feature>
<feature type="site" description="Transition state stabilizer" evidence="1">
    <location>
        <position position="94"/>
    </location>
</feature>
<feature type="cross-link" description="Tryptophyl-tyrosyl-methioninium (Trp-Tyr) (with M-249)" evidence="1">
    <location>
        <begin position="97"/>
        <end position="223"/>
    </location>
</feature>
<feature type="cross-link" description="Tryptophyl-tyrosyl-methioninium (Tyr-Met) (with W-97)" evidence="1">
    <location>
        <begin position="223"/>
        <end position="249"/>
    </location>
</feature>
<accession>B4R8U3</accession>
<evidence type="ECO:0000255" key="1">
    <source>
        <dbReference type="HAMAP-Rule" id="MF_01961"/>
    </source>
</evidence>
<evidence type="ECO:0000256" key="2">
    <source>
        <dbReference type="SAM" id="MobiDB-lite"/>
    </source>
</evidence>
<comment type="function">
    <text evidence="1">Bifunctional enzyme with both catalase and broad-spectrum peroxidase activity.</text>
</comment>
<comment type="catalytic activity">
    <reaction evidence="1">
        <text>H2O2 + AH2 = A + 2 H2O</text>
        <dbReference type="Rhea" id="RHEA:30275"/>
        <dbReference type="ChEBI" id="CHEBI:13193"/>
        <dbReference type="ChEBI" id="CHEBI:15377"/>
        <dbReference type="ChEBI" id="CHEBI:16240"/>
        <dbReference type="ChEBI" id="CHEBI:17499"/>
        <dbReference type="EC" id="1.11.1.21"/>
    </reaction>
</comment>
<comment type="catalytic activity">
    <reaction evidence="1">
        <text>2 H2O2 = O2 + 2 H2O</text>
        <dbReference type="Rhea" id="RHEA:20309"/>
        <dbReference type="ChEBI" id="CHEBI:15377"/>
        <dbReference type="ChEBI" id="CHEBI:15379"/>
        <dbReference type="ChEBI" id="CHEBI:16240"/>
        <dbReference type="EC" id="1.11.1.21"/>
    </reaction>
</comment>
<comment type="cofactor">
    <cofactor evidence="1">
        <name>heme b</name>
        <dbReference type="ChEBI" id="CHEBI:60344"/>
    </cofactor>
    <text evidence="1">Binds 1 heme b (iron(II)-protoporphyrin IX) group per dimer.</text>
</comment>
<comment type="subunit">
    <text evidence="1">Homodimer or homotetramer.</text>
</comment>
<comment type="PTM">
    <text evidence="1">Formation of the three residue Trp-Tyr-Met cross-link is important for the catalase, but not the peroxidase activity of the enzyme.</text>
</comment>
<comment type="similarity">
    <text evidence="1">Belongs to the peroxidase family. Peroxidase/catalase subfamily.</text>
</comment>
<name>KATG_PHEZH</name>
<reference key="1">
    <citation type="journal article" date="2008" name="BMC Genomics">
        <title>Complete genome of Phenylobacterium zucineum - a novel facultative intracellular bacterium isolated from human erythroleukemia cell line K562.</title>
        <authorList>
            <person name="Luo Y."/>
            <person name="Xu X."/>
            <person name="Ding Z."/>
            <person name="Liu Z."/>
            <person name="Zhang B."/>
            <person name="Yan Z."/>
            <person name="Sun J."/>
            <person name="Hu S."/>
            <person name="Hu X."/>
        </authorList>
    </citation>
    <scope>NUCLEOTIDE SEQUENCE [LARGE SCALE GENOMIC DNA]</scope>
    <source>
        <strain>HLK1</strain>
    </source>
</reference>
<gene>
    <name evidence="1" type="primary">katG</name>
    <name type="ordered locus">PHZ_c2899</name>
</gene>
<dbReference type="EC" id="1.11.1.21" evidence="1"/>
<dbReference type="EMBL" id="CP000747">
    <property type="protein sequence ID" value="ACG79308.1"/>
    <property type="molecule type" value="Genomic_DNA"/>
</dbReference>
<dbReference type="RefSeq" id="WP_012523446.1">
    <property type="nucleotide sequence ID" value="NC_011144.1"/>
</dbReference>
<dbReference type="SMR" id="B4R8U3"/>
<dbReference type="STRING" id="450851.PHZ_c2899"/>
<dbReference type="KEGG" id="pzu:PHZ_c2899"/>
<dbReference type="eggNOG" id="COG0376">
    <property type="taxonomic scope" value="Bacteria"/>
</dbReference>
<dbReference type="HOGENOM" id="CLU_025424_2_0_5"/>
<dbReference type="OrthoDB" id="9759743at2"/>
<dbReference type="Proteomes" id="UP000001868">
    <property type="component" value="Chromosome"/>
</dbReference>
<dbReference type="GO" id="GO:0005829">
    <property type="term" value="C:cytosol"/>
    <property type="evidence" value="ECO:0007669"/>
    <property type="project" value="TreeGrafter"/>
</dbReference>
<dbReference type="GO" id="GO:0004096">
    <property type="term" value="F:catalase activity"/>
    <property type="evidence" value="ECO:0007669"/>
    <property type="project" value="UniProtKB-UniRule"/>
</dbReference>
<dbReference type="GO" id="GO:0020037">
    <property type="term" value="F:heme binding"/>
    <property type="evidence" value="ECO:0007669"/>
    <property type="project" value="InterPro"/>
</dbReference>
<dbReference type="GO" id="GO:0046872">
    <property type="term" value="F:metal ion binding"/>
    <property type="evidence" value="ECO:0007669"/>
    <property type="project" value="UniProtKB-KW"/>
</dbReference>
<dbReference type="GO" id="GO:0070301">
    <property type="term" value="P:cellular response to hydrogen peroxide"/>
    <property type="evidence" value="ECO:0007669"/>
    <property type="project" value="TreeGrafter"/>
</dbReference>
<dbReference type="GO" id="GO:0042744">
    <property type="term" value="P:hydrogen peroxide catabolic process"/>
    <property type="evidence" value="ECO:0007669"/>
    <property type="project" value="UniProtKB-KW"/>
</dbReference>
<dbReference type="CDD" id="cd00649">
    <property type="entry name" value="catalase_peroxidase_1"/>
    <property type="match status" value="1"/>
</dbReference>
<dbReference type="CDD" id="cd08200">
    <property type="entry name" value="catalase_peroxidase_2"/>
    <property type="match status" value="1"/>
</dbReference>
<dbReference type="FunFam" id="1.10.420.10:FF:000004">
    <property type="entry name" value="Catalase-peroxidase"/>
    <property type="match status" value="1"/>
</dbReference>
<dbReference type="FunFam" id="1.10.520.10:FF:000002">
    <property type="entry name" value="Catalase-peroxidase"/>
    <property type="match status" value="1"/>
</dbReference>
<dbReference type="Gene3D" id="1.10.520.10">
    <property type="match status" value="2"/>
</dbReference>
<dbReference type="Gene3D" id="1.10.420.10">
    <property type="entry name" value="Peroxidase, domain 2"/>
    <property type="match status" value="2"/>
</dbReference>
<dbReference type="HAMAP" id="MF_01961">
    <property type="entry name" value="Catal_peroxid"/>
    <property type="match status" value="1"/>
</dbReference>
<dbReference type="InterPro" id="IPR000763">
    <property type="entry name" value="Catalase_peroxidase"/>
</dbReference>
<dbReference type="InterPro" id="IPR002016">
    <property type="entry name" value="Haem_peroxidase"/>
</dbReference>
<dbReference type="InterPro" id="IPR010255">
    <property type="entry name" value="Haem_peroxidase_sf"/>
</dbReference>
<dbReference type="InterPro" id="IPR019794">
    <property type="entry name" value="Peroxidases_AS"/>
</dbReference>
<dbReference type="NCBIfam" id="TIGR00198">
    <property type="entry name" value="cat_per_HPI"/>
    <property type="match status" value="1"/>
</dbReference>
<dbReference type="NCBIfam" id="NF011635">
    <property type="entry name" value="PRK15061.1"/>
    <property type="match status" value="1"/>
</dbReference>
<dbReference type="PANTHER" id="PTHR30555:SF6">
    <property type="entry name" value="CATALASE-PEROXIDASE"/>
    <property type="match status" value="1"/>
</dbReference>
<dbReference type="PANTHER" id="PTHR30555">
    <property type="entry name" value="HYDROPEROXIDASE I, BIFUNCTIONAL CATALASE-PEROXIDASE"/>
    <property type="match status" value="1"/>
</dbReference>
<dbReference type="Pfam" id="PF00141">
    <property type="entry name" value="peroxidase"/>
    <property type="match status" value="2"/>
</dbReference>
<dbReference type="PRINTS" id="PR00460">
    <property type="entry name" value="BPEROXIDASE"/>
</dbReference>
<dbReference type="PRINTS" id="PR00458">
    <property type="entry name" value="PEROXIDASE"/>
</dbReference>
<dbReference type="SUPFAM" id="SSF48113">
    <property type="entry name" value="Heme-dependent peroxidases"/>
    <property type="match status" value="2"/>
</dbReference>
<dbReference type="PROSITE" id="PS00436">
    <property type="entry name" value="PEROXIDASE_2"/>
    <property type="match status" value="1"/>
</dbReference>
<dbReference type="PROSITE" id="PS50873">
    <property type="entry name" value="PEROXIDASE_4"/>
    <property type="match status" value="2"/>
</dbReference>
<keyword id="KW-0349">Heme</keyword>
<keyword id="KW-0376">Hydrogen peroxide</keyword>
<keyword id="KW-0408">Iron</keyword>
<keyword id="KW-0479">Metal-binding</keyword>
<keyword id="KW-0560">Oxidoreductase</keyword>
<keyword id="KW-0575">Peroxidase</keyword>
<keyword id="KW-1185">Reference proteome</keyword>
<protein>
    <recommendedName>
        <fullName evidence="1">Catalase-peroxidase</fullName>
        <shortName evidence="1">CP</shortName>
        <ecNumber evidence="1">1.11.1.21</ecNumber>
    </recommendedName>
    <alternativeName>
        <fullName evidence="1">Peroxidase/catalase</fullName>
    </alternativeName>
</protein>
<organism>
    <name type="scientific">Phenylobacterium zucineum (strain HLK1)</name>
    <dbReference type="NCBI Taxonomy" id="450851"/>
    <lineage>
        <taxon>Bacteria</taxon>
        <taxon>Pseudomonadati</taxon>
        <taxon>Pseudomonadota</taxon>
        <taxon>Alphaproteobacteria</taxon>
        <taxon>Caulobacterales</taxon>
        <taxon>Caulobacteraceae</taxon>
        <taxon>Phenylobacterium</taxon>
    </lineage>
</organism>